<reference key="1">
    <citation type="journal article" date="2008" name="J. Bacteriol.">
        <title>The genome sequence of the tomato-pathogenic actinomycete Clavibacter michiganensis subsp. michiganensis NCPPB382 reveals a large island involved in pathogenicity.</title>
        <authorList>
            <person name="Gartemann K.-H."/>
            <person name="Abt B."/>
            <person name="Bekel T."/>
            <person name="Burger A."/>
            <person name="Engemann J."/>
            <person name="Fluegel M."/>
            <person name="Gaigalat L."/>
            <person name="Goesmann A."/>
            <person name="Graefen I."/>
            <person name="Kalinowski J."/>
            <person name="Kaup O."/>
            <person name="Kirchner O."/>
            <person name="Krause L."/>
            <person name="Linke B."/>
            <person name="McHardy A."/>
            <person name="Meyer F."/>
            <person name="Pohle S."/>
            <person name="Rueckert C."/>
            <person name="Schneiker S."/>
            <person name="Zellermann E.-M."/>
            <person name="Puehler A."/>
            <person name="Eichenlaub R."/>
            <person name="Kaiser O."/>
            <person name="Bartels D."/>
        </authorList>
    </citation>
    <scope>NUCLEOTIDE SEQUENCE [LARGE SCALE GENOMIC DNA]</scope>
    <source>
        <strain>NCPPB 382</strain>
    </source>
</reference>
<gene>
    <name evidence="1" type="primary">ruvC</name>
    <name type="ordered locus">CMM_1816</name>
</gene>
<protein>
    <recommendedName>
        <fullName evidence="1">Crossover junction endodeoxyribonuclease RuvC</fullName>
        <ecNumber evidence="1">3.1.21.10</ecNumber>
    </recommendedName>
    <alternativeName>
        <fullName evidence="1">Holliday junction nuclease RuvC</fullName>
    </alternativeName>
    <alternativeName>
        <fullName evidence="1">Holliday junction resolvase RuvC</fullName>
    </alternativeName>
</protein>
<comment type="function">
    <text evidence="1">The RuvA-RuvB-RuvC complex processes Holliday junction (HJ) DNA during genetic recombination and DNA repair. Endonuclease that resolves HJ intermediates. Cleaves cruciform DNA by making single-stranded nicks across the HJ at symmetrical positions within the homologous arms, yielding a 5'-phosphate and a 3'-hydroxyl group; requires a central core of homology in the junction. The consensus cleavage sequence is 5'-(A/T)TT(C/G)-3'. Cleavage occurs on the 3'-side of the TT dinucleotide at the point of strand exchange. HJ branch migration catalyzed by RuvA-RuvB allows RuvC to scan DNA until it finds its consensus sequence, where it cleaves and resolves the cruciform DNA.</text>
</comment>
<comment type="catalytic activity">
    <reaction evidence="1">
        <text>Endonucleolytic cleavage at a junction such as a reciprocal single-stranded crossover between two homologous DNA duplexes (Holliday junction).</text>
        <dbReference type="EC" id="3.1.21.10"/>
    </reaction>
</comment>
<comment type="cofactor">
    <cofactor evidence="1">
        <name>Mg(2+)</name>
        <dbReference type="ChEBI" id="CHEBI:18420"/>
    </cofactor>
    <text evidence="1">Binds 2 Mg(2+) ion per subunit.</text>
</comment>
<comment type="subunit">
    <text evidence="1">Homodimer which binds Holliday junction (HJ) DNA. The HJ becomes 2-fold symmetrical on binding to RuvC with unstacked arms; it has a different conformation from HJ DNA in complex with RuvA. In the full resolvosome a probable DNA-RuvA(4)-RuvB(12)-RuvC(2) complex forms which resolves the HJ.</text>
</comment>
<comment type="subcellular location">
    <subcellularLocation>
        <location evidence="1">Cytoplasm</location>
    </subcellularLocation>
</comment>
<comment type="similarity">
    <text evidence="1">Belongs to the RuvC family.</text>
</comment>
<dbReference type="EC" id="3.1.21.10" evidence="1"/>
<dbReference type="EMBL" id="AM711867">
    <property type="protein sequence ID" value="CAN01871.1"/>
    <property type="molecule type" value="Genomic_DNA"/>
</dbReference>
<dbReference type="RefSeq" id="WP_012038503.1">
    <property type="nucleotide sequence ID" value="NC_009480.1"/>
</dbReference>
<dbReference type="SMR" id="A5CS08"/>
<dbReference type="KEGG" id="cmi:CMM_1816"/>
<dbReference type="eggNOG" id="COG0817">
    <property type="taxonomic scope" value="Bacteria"/>
</dbReference>
<dbReference type="HOGENOM" id="CLU_091257_0_2_11"/>
<dbReference type="OrthoDB" id="9805499at2"/>
<dbReference type="Proteomes" id="UP000001564">
    <property type="component" value="Chromosome"/>
</dbReference>
<dbReference type="GO" id="GO:0005737">
    <property type="term" value="C:cytoplasm"/>
    <property type="evidence" value="ECO:0007669"/>
    <property type="project" value="UniProtKB-SubCell"/>
</dbReference>
<dbReference type="GO" id="GO:0048476">
    <property type="term" value="C:Holliday junction resolvase complex"/>
    <property type="evidence" value="ECO:0007669"/>
    <property type="project" value="UniProtKB-UniRule"/>
</dbReference>
<dbReference type="GO" id="GO:0008821">
    <property type="term" value="F:crossover junction DNA endonuclease activity"/>
    <property type="evidence" value="ECO:0007669"/>
    <property type="project" value="UniProtKB-UniRule"/>
</dbReference>
<dbReference type="GO" id="GO:0003677">
    <property type="term" value="F:DNA binding"/>
    <property type="evidence" value="ECO:0007669"/>
    <property type="project" value="UniProtKB-KW"/>
</dbReference>
<dbReference type="GO" id="GO:0000287">
    <property type="term" value="F:magnesium ion binding"/>
    <property type="evidence" value="ECO:0007669"/>
    <property type="project" value="UniProtKB-UniRule"/>
</dbReference>
<dbReference type="GO" id="GO:0006310">
    <property type="term" value="P:DNA recombination"/>
    <property type="evidence" value="ECO:0007669"/>
    <property type="project" value="UniProtKB-UniRule"/>
</dbReference>
<dbReference type="GO" id="GO:0006281">
    <property type="term" value="P:DNA repair"/>
    <property type="evidence" value="ECO:0007669"/>
    <property type="project" value="UniProtKB-UniRule"/>
</dbReference>
<dbReference type="CDD" id="cd16962">
    <property type="entry name" value="RuvC"/>
    <property type="match status" value="1"/>
</dbReference>
<dbReference type="FunFam" id="3.30.420.10:FF:000002">
    <property type="entry name" value="Crossover junction endodeoxyribonuclease RuvC"/>
    <property type="match status" value="1"/>
</dbReference>
<dbReference type="Gene3D" id="3.30.420.10">
    <property type="entry name" value="Ribonuclease H-like superfamily/Ribonuclease H"/>
    <property type="match status" value="1"/>
</dbReference>
<dbReference type="HAMAP" id="MF_00034">
    <property type="entry name" value="RuvC"/>
    <property type="match status" value="1"/>
</dbReference>
<dbReference type="InterPro" id="IPR012337">
    <property type="entry name" value="RNaseH-like_sf"/>
</dbReference>
<dbReference type="InterPro" id="IPR036397">
    <property type="entry name" value="RNaseH_sf"/>
</dbReference>
<dbReference type="InterPro" id="IPR020563">
    <property type="entry name" value="X-over_junc_endoDNase_Mg_BS"/>
</dbReference>
<dbReference type="InterPro" id="IPR002176">
    <property type="entry name" value="X-over_junc_endoDNase_RuvC"/>
</dbReference>
<dbReference type="NCBIfam" id="TIGR00228">
    <property type="entry name" value="ruvC"/>
    <property type="match status" value="1"/>
</dbReference>
<dbReference type="PANTHER" id="PTHR30194">
    <property type="entry name" value="CROSSOVER JUNCTION ENDODEOXYRIBONUCLEASE RUVC"/>
    <property type="match status" value="1"/>
</dbReference>
<dbReference type="PANTHER" id="PTHR30194:SF3">
    <property type="entry name" value="CROSSOVER JUNCTION ENDODEOXYRIBONUCLEASE RUVC"/>
    <property type="match status" value="1"/>
</dbReference>
<dbReference type="Pfam" id="PF02075">
    <property type="entry name" value="RuvC"/>
    <property type="match status" value="1"/>
</dbReference>
<dbReference type="PRINTS" id="PR00696">
    <property type="entry name" value="RSOLVASERUVC"/>
</dbReference>
<dbReference type="SUPFAM" id="SSF53098">
    <property type="entry name" value="Ribonuclease H-like"/>
    <property type="match status" value="1"/>
</dbReference>
<dbReference type="PROSITE" id="PS01321">
    <property type="entry name" value="RUVC"/>
    <property type="match status" value="1"/>
</dbReference>
<evidence type="ECO:0000255" key="1">
    <source>
        <dbReference type="HAMAP-Rule" id="MF_00034"/>
    </source>
</evidence>
<feature type="chain" id="PRO_1000057263" description="Crossover junction endodeoxyribonuclease RuvC">
    <location>
        <begin position="1"/>
        <end position="202"/>
    </location>
</feature>
<feature type="active site" evidence="1">
    <location>
        <position position="7"/>
    </location>
</feature>
<feature type="active site" evidence="1">
    <location>
        <position position="68"/>
    </location>
</feature>
<feature type="active site" evidence="1">
    <location>
        <position position="141"/>
    </location>
</feature>
<feature type="binding site" evidence="1">
    <location>
        <position position="7"/>
    </location>
    <ligand>
        <name>Mg(2+)</name>
        <dbReference type="ChEBI" id="CHEBI:18420"/>
        <label>1</label>
    </ligand>
</feature>
<feature type="binding site" evidence="1">
    <location>
        <position position="68"/>
    </location>
    <ligand>
        <name>Mg(2+)</name>
        <dbReference type="ChEBI" id="CHEBI:18420"/>
        <label>2</label>
    </ligand>
</feature>
<feature type="binding site" evidence="1">
    <location>
        <position position="141"/>
    </location>
    <ligand>
        <name>Mg(2+)</name>
        <dbReference type="ChEBI" id="CHEBI:18420"/>
        <label>1</label>
    </ligand>
</feature>
<sequence>MRILGIDPGLTRCGVGVVDVYADRSARLVDVQVVRTSPTAELHHRLLAVGDGIEELVERHRPSVVAIERVFAQDNLSTVMGVAQITGVALVGAARRGLDVALHTPSEVKAAVTGYGQADKKQVATMVARILGLDELPTPADASDALALAICAGWRAGMSRAGIAGTPTPTARATGADAASGAGPTAAQAAWLAAERAQRGRR</sequence>
<proteinExistence type="inferred from homology"/>
<keyword id="KW-0963">Cytoplasm</keyword>
<keyword id="KW-0227">DNA damage</keyword>
<keyword id="KW-0233">DNA recombination</keyword>
<keyword id="KW-0234">DNA repair</keyword>
<keyword id="KW-0238">DNA-binding</keyword>
<keyword id="KW-0255">Endonuclease</keyword>
<keyword id="KW-0378">Hydrolase</keyword>
<keyword id="KW-0460">Magnesium</keyword>
<keyword id="KW-0479">Metal-binding</keyword>
<keyword id="KW-0540">Nuclease</keyword>
<accession>A5CS08</accession>
<name>RUVC_CLAM3</name>
<organism>
    <name type="scientific">Clavibacter michiganensis subsp. michiganensis (strain NCPPB 382)</name>
    <dbReference type="NCBI Taxonomy" id="443906"/>
    <lineage>
        <taxon>Bacteria</taxon>
        <taxon>Bacillati</taxon>
        <taxon>Actinomycetota</taxon>
        <taxon>Actinomycetes</taxon>
        <taxon>Micrococcales</taxon>
        <taxon>Microbacteriaceae</taxon>
        <taxon>Clavibacter</taxon>
    </lineage>
</organism>